<keyword id="KW-0089">Bile pigment</keyword>
<keyword id="KW-0150">Chloroplast</keyword>
<keyword id="KW-0157">Chromophore</keyword>
<keyword id="KW-0249">Electron transport</keyword>
<keyword id="KW-0472">Membrane</keyword>
<keyword id="KW-0602">Photosynthesis</keyword>
<keyword id="KW-0934">Plastid</keyword>
<keyword id="KW-0793">Thylakoid</keyword>
<keyword id="KW-0813">Transport</keyword>
<geneLocation type="chloroplast" evidence="4"/>
<sequence length="116" mass="12033">MMSKIVLVGLVGSAAAFNAPMMTVRRDAIATGAAAAVVAPILRPAGAAMKKNSKAPCVTIFDERDGCGGPTRAKTGAGEEGLMVKIQMQEIKLGRGAGAEYVSIFTNYDKKLFGVK</sequence>
<proteinExistence type="inferred from homology"/>
<comment type="function">
    <text evidence="3">Light-harvesting photosynthetic tetrapyrrole chromophore-protein from the phycobiliprotein complex.</text>
</comment>
<comment type="subunit">
    <text evidence="1">Heterotetramer of 2 different alpha chains and 2 identical beta chains which form 2 alpha-beta heterodimers within the heterotetramer. The two alpha-beta heterodimers are rotated to an open configuration in contrast to the closed configuration found in other cryptophyte species due to the insertion of a single amino acid, Asp-65, in a conserved region of the alpha chain. In the open form, the central chromophores are not in physical contact but are separated by a water-filled channel.</text>
</comment>
<comment type="subcellular location">
    <subcellularLocation>
        <location evidence="3">Plastid</location>
        <location evidence="3">Chloroplast thylakoid membrane</location>
        <topology evidence="3">Peripheral membrane protein</topology>
        <orientation evidence="3">Lumenal side</orientation>
    </subcellularLocation>
</comment>
<comment type="PTM">
    <text evidence="1">Contains three phycoerythrobilin chromophores with binding mediated by both the alpha and beta subunits.</text>
</comment>
<comment type="miscellaneous">
    <text evidence="3">The light-harvesting system in Cryptophytes contains phycobiliprotein complexes. Unusually they are composed of either phycoerythrin (CPE) or phycocyanin (CPC) but never allophycocyanin (APC), with only one type of biliprotein being present in any one species. Unlike cyanobacteria or red algae these proteins are not arranged into higher-order phycobilisome complexes, and they are found in the thylakoid lumen.</text>
</comment>
<comment type="similarity">
    <text evidence="3">Belongs to the phycoerythrin family.</text>
</comment>
<reference evidence="4" key="1">
    <citation type="journal article" date="2014" name="Proc. Natl. Acad. Sci. U.S.A.">
        <title>Single-residue insertion switches the quaternary structure and exciton states of cryptophyte light-harvesting proteins.</title>
        <authorList>
            <person name="Harrop S.J."/>
            <person name="Wilk K.E."/>
            <person name="Dinshaw R."/>
            <person name="Collini E."/>
            <person name="Mirkovic T."/>
            <person name="Teng C.Y."/>
            <person name="Oblinsky D.G."/>
            <person name="Green B.R."/>
            <person name="Hoef-Emden K."/>
            <person name="Hiller R.G."/>
            <person name="Scholes G.D."/>
            <person name="Curmi P.M."/>
        </authorList>
    </citation>
    <scope>NUCLEOTIDE SEQUENCE [MRNA]</scope>
    <source>
        <strain evidence="4">CCMP644</strain>
    </source>
</reference>
<feature type="chain" id="PRO_5004664571" description="Phycoerythrin alpha-3 subunit" evidence="2">
    <location>
        <begin position="1"/>
        <end position="116"/>
    </location>
</feature>
<feature type="binding site" evidence="1">
    <location>
        <position position="53"/>
    </location>
    <ligand>
        <name>(2R,3E)-phycoerythrobilin</name>
        <dbReference type="ChEBI" id="CHEBI:85276"/>
        <label>1</label>
        <note>ligand shared with beta subunit</note>
    </ligand>
</feature>
<feature type="binding site" evidence="1">
    <location>
        <position position="63"/>
    </location>
    <ligand>
        <name>(2R,3E)-phycoerythrobilin</name>
        <dbReference type="ChEBI" id="CHEBI:85276"/>
        <label>2</label>
        <note>ligand shared with beta subunit</note>
    </ligand>
</feature>
<feature type="binding site" evidence="1">
    <location>
        <position position="64"/>
    </location>
    <ligand>
        <name>(2R,3E)-phycoerythrobilin</name>
        <dbReference type="ChEBI" id="CHEBI:85276"/>
        <label>3</label>
        <note>ligand shared with beta subunit</note>
    </ligand>
</feature>
<feature type="binding site" description="covalent" evidence="1">
    <location>
        <position position="67"/>
    </location>
    <ligand>
        <name>(2R,3E)-phycoerythrobilin</name>
        <dbReference type="ChEBI" id="CHEBI:85276"/>
        <label>2</label>
        <note>ligand shared with beta subunit</note>
    </ligand>
</feature>
<feature type="binding site" evidence="1">
    <location>
        <position position="85"/>
    </location>
    <ligand>
        <name>(2R,3E)-phycoerythrobilin</name>
        <dbReference type="ChEBI" id="CHEBI:85276"/>
        <label>2</label>
        <note>ligand shared with beta subunit</note>
    </ligand>
</feature>
<protein>
    <recommendedName>
        <fullName evidence="3">Phycoerythrin alpha-3 subunit</fullName>
    </recommendedName>
</protein>
<organism evidence="4">
    <name type="scientific">Hemiselmis andersenii</name>
    <name type="common">Cryptophyte alga</name>
    <dbReference type="NCBI Taxonomy" id="464988"/>
    <lineage>
        <taxon>Eukaryota</taxon>
        <taxon>Cryptophyceae</taxon>
        <taxon>Cryptomonadales</taxon>
        <taxon>Hemiselmidaceae</taxon>
        <taxon>Hemiselmis</taxon>
    </lineage>
</organism>
<accession>U5T8F7</accession>
<dbReference type="EMBL" id="KF314694">
    <property type="protein sequence ID" value="AGY96991.1"/>
    <property type="molecule type" value="mRNA"/>
</dbReference>
<dbReference type="SMR" id="U5T8F7"/>
<dbReference type="GO" id="GO:0009535">
    <property type="term" value="C:chloroplast thylakoid membrane"/>
    <property type="evidence" value="ECO:0007669"/>
    <property type="project" value="UniProtKB-SubCell"/>
</dbReference>
<dbReference type="GO" id="GO:0030089">
    <property type="term" value="C:phycobilisome"/>
    <property type="evidence" value="ECO:0007669"/>
    <property type="project" value="InterPro"/>
</dbReference>
<dbReference type="GO" id="GO:0015979">
    <property type="term" value="P:photosynthesis"/>
    <property type="evidence" value="ECO:0007669"/>
    <property type="project" value="UniProtKB-KW"/>
</dbReference>
<dbReference type="Gene3D" id="3.90.510.10">
    <property type="entry name" value="Phycoerythrin alpha chain"/>
    <property type="match status" value="1"/>
</dbReference>
<dbReference type="InterPro" id="IPR011070">
    <property type="entry name" value="Globular_prot_asu/bsu"/>
</dbReference>
<dbReference type="InterPro" id="IPR037011">
    <property type="entry name" value="Phycoerythr-like_a_sf"/>
</dbReference>
<dbReference type="InterPro" id="IPR004228">
    <property type="entry name" value="Phycoerythr_a"/>
</dbReference>
<dbReference type="Pfam" id="PF02972">
    <property type="entry name" value="Phycoerythr_ab"/>
    <property type="match status" value="1"/>
</dbReference>
<dbReference type="SUPFAM" id="SSF56568">
    <property type="entry name" value="Non-globular alpha+beta subunits of globular proteins"/>
    <property type="match status" value="1"/>
</dbReference>
<evidence type="ECO:0000250" key="1">
    <source>
        <dbReference type="UniProtKB" id="U5TBU5"/>
    </source>
</evidence>
<evidence type="ECO:0000255" key="2"/>
<evidence type="ECO:0000305" key="3"/>
<evidence type="ECO:0000312" key="4">
    <source>
        <dbReference type="EMBL" id="AGY96991.1"/>
    </source>
</evidence>
<name>PHEA3_HEMAN</name>